<feature type="chain" id="PRO_0000101271" description="DNA polymerase subunit gamma-1">
    <location>
        <begin position="1"/>
        <end position="1218"/>
    </location>
</feature>
<feature type="region of interest" description="Disordered" evidence="2">
    <location>
        <begin position="31"/>
        <end position="50"/>
    </location>
</feature>
<feature type="region of interest" description="Disordered" evidence="2">
    <location>
        <begin position="484"/>
        <end position="524"/>
    </location>
</feature>
<feature type="region of interest" description="Accessory-interacting determinant" evidence="1">
    <location>
        <begin position="492"/>
        <end position="553"/>
    </location>
</feature>
<feature type="region of interest" description="Trigger loop" evidence="1">
    <location>
        <begin position="837"/>
        <end position="843"/>
    </location>
</feature>
<feature type="short sequence motif" description="Exo I" evidence="1">
    <location>
        <begin position="179"/>
        <end position="183"/>
    </location>
</feature>
<feature type="short sequence motif" description="Exo II" evidence="1">
    <location>
        <begin position="250"/>
        <end position="258"/>
    </location>
</feature>
<feature type="short sequence motif" description="Exo III" evidence="1">
    <location>
        <begin position="378"/>
        <end position="386"/>
    </location>
</feature>
<feature type="short sequence motif" description="Pol A" evidence="1">
    <location>
        <begin position="866"/>
        <end position="875"/>
    </location>
</feature>
<feature type="short sequence motif" description="Pol B" evidence="1">
    <location>
        <begin position="922"/>
        <end position="937"/>
    </location>
</feature>
<feature type="short sequence motif" description="Pol C" evidence="1">
    <location>
        <begin position="1113"/>
        <end position="1120"/>
    </location>
</feature>
<feature type="compositionally biased region" description="Acidic residues" evidence="2">
    <location>
        <begin position="507"/>
        <end position="520"/>
    </location>
</feature>
<feature type="active site" description="Exonuclease activity" evidence="1">
    <location>
        <position position="181"/>
    </location>
</feature>
<feature type="binding site" evidence="1">
    <location>
        <position position="289"/>
    </location>
    <ligand>
        <name>DNA</name>
        <dbReference type="ChEBI" id="CHEBI:16991"/>
        <label>template strand</label>
    </ligand>
</feature>
<feature type="binding site" evidence="1">
    <location>
        <position position="561"/>
    </location>
    <ligand>
        <name>RNA</name>
        <dbReference type="ChEBI" id="CHEBI:33697"/>
        <label>primer</label>
    </ligand>
</feature>
<feature type="binding site" evidence="1">
    <location>
        <position position="575"/>
    </location>
    <ligand>
        <name>DNA</name>
        <dbReference type="ChEBI" id="CHEBI:16991"/>
        <label>template strand</label>
    </ligand>
</feature>
<feature type="binding site" evidence="1">
    <location>
        <position position="733"/>
    </location>
    <ligand>
        <name>RNA</name>
        <dbReference type="ChEBI" id="CHEBI:33697"/>
        <label>primer</label>
    </ligand>
</feature>
<feature type="binding site" evidence="1">
    <location>
        <position position="742"/>
    </location>
    <ligand>
        <name>RNA</name>
        <dbReference type="ChEBI" id="CHEBI:33697"/>
        <label>primer</label>
    </ligand>
</feature>
<feature type="binding site" evidence="1">
    <location>
        <position position="747"/>
    </location>
    <ligand>
        <name>RNA</name>
        <dbReference type="ChEBI" id="CHEBI:33697"/>
        <label>primer</label>
    </ligand>
</feature>
<feature type="binding site" evidence="1">
    <location>
        <position position="785"/>
    </location>
    <ligand>
        <name>DNA</name>
        <dbReference type="ChEBI" id="CHEBI:16991"/>
        <label>template strand</label>
    </ligand>
</feature>
<feature type="binding site" evidence="1">
    <location>
        <position position="828"/>
    </location>
    <ligand>
        <name>DNA</name>
        <dbReference type="ChEBI" id="CHEBI:16991"/>
        <label>template strand</label>
    </ligand>
</feature>
<feature type="binding site" evidence="1">
    <location>
        <position position="842"/>
    </location>
    <ligand>
        <name>RNA</name>
        <dbReference type="ChEBI" id="CHEBI:33697"/>
        <label>primer</label>
    </ligand>
</feature>
<feature type="binding site" evidence="1">
    <location>
        <position position="848"/>
    </location>
    <ligand>
        <name>RNA</name>
        <dbReference type="ChEBI" id="CHEBI:33697"/>
        <label>primer</label>
    </ligand>
</feature>
<feature type="binding site" evidence="1">
    <location>
        <position position="869"/>
    </location>
    <ligand>
        <name>a 2'-deoxyribonucleoside 5'-triphosphate</name>
        <dbReference type="ChEBI" id="CHEBI:61560"/>
    </ligand>
</feature>
<feature type="binding site" evidence="1">
    <location>
        <position position="869"/>
    </location>
    <ligand>
        <name>Mg(2+)</name>
        <dbReference type="ChEBI" id="CHEBI:18420"/>
        <label>1</label>
        <note>catalytic</note>
    </ligand>
</feature>
<feature type="binding site" evidence="1">
    <location>
        <position position="869"/>
    </location>
    <ligand>
        <name>Mg(2+)</name>
        <dbReference type="ChEBI" id="CHEBI:18420"/>
        <label>2</label>
        <note>catalytic</note>
    </ligand>
</feature>
<feature type="binding site" evidence="1">
    <location>
        <position position="870"/>
    </location>
    <ligand>
        <name>a 2'-deoxyribonucleoside 5'-triphosphate</name>
        <dbReference type="ChEBI" id="CHEBI:61560"/>
    </ligand>
</feature>
<feature type="binding site" evidence="1">
    <location>
        <position position="870"/>
    </location>
    <ligand>
        <name>Mg(2+)</name>
        <dbReference type="ChEBI" id="CHEBI:18420"/>
        <label>2</label>
        <note>catalytic</note>
    </ligand>
</feature>
<feature type="binding site" evidence="1">
    <location>
        <position position="872"/>
    </location>
    <ligand>
        <name>a 2'-deoxyribonucleoside 5'-triphosphate</name>
        <dbReference type="ChEBI" id="CHEBI:61560"/>
    </ligand>
</feature>
<feature type="binding site" evidence="1">
    <location>
        <position position="874"/>
    </location>
    <ligand>
        <name>a 2'-deoxyribonucleoside 5'-triphosphate</name>
        <dbReference type="ChEBI" id="CHEBI:61560"/>
    </ligand>
</feature>
<feature type="binding site" evidence="1">
    <location>
        <position position="922"/>
    </location>
    <ligand>
        <name>a 2'-deoxyribonucleoside 5'-triphosphate</name>
        <dbReference type="ChEBI" id="CHEBI:61560"/>
    </ligand>
</feature>
<feature type="binding site" evidence="1">
    <location>
        <position position="926"/>
    </location>
    <ligand>
        <name>a 2'-deoxyribonucleoside 5'-triphosphate</name>
        <dbReference type="ChEBI" id="CHEBI:61560"/>
    </ligand>
</feature>
<feature type="binding site" evidence="1">
    <location>
        <position position="930"/>
    </location>
    <ligand>
        <name>a 2'-deoxyribonucleoside 5'-triphosphate</name>
        <dbReference type="ChEBI" id="CHEBI:61560"/>
    </ligand>
</feature>
<feature type="binding site" evidence="1">
    <location>
        <position position="1073"/>
    </location>
    <ligand>
        <name>DNA</name>
        <dbReference type="ChEBI" id="CHEBI:16991"/>
        <label>template strand</label>
    </ligand>
</feature>
<feature type="binding site" evidence="1">
    <location>
        <position position="1074"/>
    </location>
    <ligand>
        <name>DNA</name>
        <dbReference type="ChEBI" id="CHEBI:16991"/>
        <label>template strand</label>
    </ligand>
</feature>
<feature type="binding site" evidence="1">
    <location>
        <position position="1114"/>
    </location>
    <ligand>
        <name>a 2'-deoxyribonucleoside 5'-triphosphate</name>
        <dbReference type="ChEBI" id="CHEBI:61560"/>
    </ligand>
</feature>
<feature type="binding site" evidence="1">
    <location>
        <position position="1114"/>
    </location>
    <ligand>
        <name>Mg(2+)</name>
        <dbReference type="ChEBI" id="CHEBI:18420"/>
        <label>1</label>
        <note>catalytic</note>
    </ligand>
</feature>
<feature type="binding site" evidence="1">
    <location>
        <position position="1114"/>
    </location>
    <ligand>
        <name>Mg(2+)</name>
        <dbReference type="ChEBI" id="CHEBI:18420"/>
        <label>2</label>
        <note>catalytic</note>
    </ligand>
</feature>
<feature type="site" description="Critical for replication fidelity and mismatch recognition" evidence="1">
    <location>
        <position position="832"/>
    </location>
</feature>
<feature type="site" description="Critical for replication fidelity and mismatch recognition" evidence="1">
    <location>
        <position position="1081"/>
    </location>
</feature>
<feature type="mutagenesis site" description="Results in loss of exonuclease activity associated with impaired mtDNA 5'-end ligation and accumulation of somatic mtDNA mutations. Mice carrying this mutation show premature aging and reduced lifespan." evidence="3 4">
    <original>D</original>
    <variation>A</variation>
    <location>
        <position position="257"/>
    </location>
</feature>
<feature type="sequence conflict" description="In Ref. 1; AAA98977." evidence="6" ref="1">
    <original>AR</original>
    <variation>EG</variation>
    <location>
        <begin position="23"/>
        <end position="24"/>
    </location>
</feature>
<feature type="sequence conflict" description="In Ref. 1; AAA98977." evidence="6" ref="1">
    <original>A</original>
    <variation>S</variation>
    <location>
        <position position="27"/>
    </location>
</feature>
<feature type="sequence conflict" description="In Ref. 1; AAA98977." evidence="6" ref="1">
    <original>D</original>
    <variation>A</variation>
    <location>
        <position position="32"/>
    </location>
</feature>
<feature type="sequence conflict" description="In Ref. 1; AAA98977." evidence="6" ref="1">
    <original>T</original>
    <variation>N</variation>
    <location>
        <position position="159"/>
    </location>
</feature>
<feature type="sequence conflict" description="In Ref. 1; AAA98977." evidence="6" ref="1">
    <original>I</original>
    <variation>T</variation>
    <location>
        <position position="228"/>
    </location>
</feature>
<feature type="sequence conflict" description="In Ref. 1; AAA98977." evidence="6" ref="1">
    <original>HKNPAA</original>
    <variation>QQDPAV</variation>
    <location>
        <begin position="303"/>
        <end position="308"/>
    </location>
</feature>
<feature type="sequence conflict" description="In Ref. 1; AAA98977." evidence="6" ref="1">
    <original>E</original>
    <variation>D</variation>
    <location>
        <position position="324"/>
    </location>
</feature>
<feature type="sequence conflict" description="In Ref. 1; AAA98977." evidence="6" ref="1">
    <location>
        <position position="327"/>
    </location>
</feature>
<feature type="sequence conflict" description="In Ref. 1; AAA98977." evidence="6" ref="1">
    <original>Q</original>
    <variation>K</variation>
    <location>
        <position position="557"/>
    </location>
</feature>
<feature type="sequence conflict" description="In Ref. 1; AAA98977." evidence="6" ref="1">
    <original>N</original>
    <variation>S</variation>
    <location>
        <position position="666"/>
    </location>
</feature>
<feature type="sequence conflict" description="In Ref. 1; AAA98977." evidence="6" ref="1">
    <original>P</original>
    <variation>T</variation>
    <location>
        <position position="861"/>
    </location>
</feature>
<feature type="sequence conflict" description="In Ref. 1; AAA98977." evidence="6" ref="1">
    <original>F</original>
    <variation>L</variation>
    <location>
        <position position="886"/>
    </location>
</feature>
<feature type="sequence conflict" description="In Ref. 1; AAA98977." evidence="6" ref="1">
    <original>GIS</original>
    <variation>RIH</variation>
    <location>
        <begin position="919"/>
        <end position="921"/>
    </location>
</feature>
<feature type="sequence conflict" description="In Ref. 1; AAA98977." evidence="6" ref="1">
    <original>A</original>
    <variation>S</variation>
    <location>
        <position position="1024"/>
    </location>
</feature>
<dbReference type="EC" id="2.7.7.7" evidence="1 4"/>
<dbReference type="EC" id="3.1.11.-" evidence="1"/>
<dbReference type="EC" id="4.2.99.-" evidence="1"/>
<dbReference type="EMBL" id="U53584">
    <property type="protein sequence ID" value="AAA98977.1"/>
    <property type="status" value="ALT_FRAME"/>
    <property type="molecule type" value="mRNA"/>
</dbReference>
<dbReference type="EMBL" id="AF268975">
    <property type="protein sequence ID" value="AAF82772.1"/>
    <property type="status" value="ALT_SEQ"/>
    <property type="molecule type" value="Genomic_DNA"/>
</dbReference>
<dbReference type="EMBL" id="AF268970">
    <property type="protein sequence ID" value="AAF82772.1"/>
    <property type="status" value="JOINED"/>
    <property type="molecule type" value="Genomic_DNA"/>
</dbReference>
<dbReference type="EMBL" id="AF268971">
    <property type="protein sequence ID" value="AAF82772.1"/>
    <property type="status" value="JOINED"/>
    <property type="molecule type" value="Genomic_DNA"/>
</dbReference>
<dbReference type="EMBL" id="AF268972">
    <property type="protein sequence ID" value="AAF82772.1"/>
    <property type="status" value="JOINED"/>
    <property type="molecule type" value="Genomic_DNA"/>
</dbReference>
<dbReference type="EMBL" id="AF268973">
    <property type="protein sequence ID" value="AAF82772.1"/>
    <property type="status" value="JOINED"/>
    <property type="molecule type" value="Genomic_DNA"/>
</dbReference>
<dbReference type="EMBL" id="AF268974">
    <property type="protein sequence ID" value="AAF82772.1"/>
    <property type="status" value="JOINED"/>
    <property type="molecule type" value="Genomic_DNA"/>
</dbReference>
<dbReference type="SMR" id="P54099"/>
<dbReference type="ComplexPortal" id="CPX-2094">
    <property type="entry name" value="Mitochondrial DNA polymerase gamma complex"/>
</dbReference>
<dbReference type="FunCoup" id="P54099">
    <property type="interactions" value="655"/>
</dbReference>
<dbReference type="IntAct" id="P54099">
    <property type="interactions" value="2"/>
</dbReference>
<dbReference type="STRING" id="10090.ENSMUSP00000073551"/>
<dbReference type="GlyGen" id="P54099">
    <property type="glycosylation" value="1 site"/>
</dbReference>
<dbReference type="iPTMnet" id="P54099"/>
<dbReference type="PhosphoSitePlus" id="P54099"/>
<dbReference type="SwissPalm" id="P54099"/>
<dbReference type="PaxDb" id="10090-ENSMUSP00000073551"/>
<dbReference type="PeptideAtlas" id="P54099"/>
<dbReference type="ProteomicsDB" id="277389"/>
<dbReference type="Pumba" id="P54099"/>
<dbReference type="AGR" id="MGI:1196389"/>
<dbReference type="MGI" id="MGI:1196389">
    <property type="gene designation" value="Polg"/>
</dbReference>
<dbReference type="eggNOG" id="KOG3657">
    <property type="taxonomic scope" value="Eukaryota"/>
</dbReference>
<dbReference type="InParanoid" id="P54099"/>
<dbReference type="Reactome" id="R-MMU-9913635">
    <property type="pathway name" value="Strand-asynchronous mitochondrial DNA replication"/>
</dbReference>
<dbReference type="ChiTaRS" id="Polg">
    <property type="organism name" value="mouse"/>
</dbReference>
<dbReference type="PRO" id="PR:P54099"/>
<dbReference type="Proteomes" id="UP000000589">
    <property type="component" value="Unplaced"/>
</dbReference>
<dbReference type="RNAct" id="P54099">
    <property type="molecule type" value="protein"/>
</dbReference>
<dbReference type="GO" id="GO:0005760">
    <property type="term" value="C:gamma DNA polymerase complex"/>
    <property type="evidence" value="ECO:0000250"/>
    <property type="project" value="UniProtKB"/>
</dbReference>
<dbReference type="GO" id="GO:0005743">
    <property type="term" value="C:mitochondrial inner membrane"/>
    <property type="evidence" value="ECO:0007005"/>
    <property type="project" value="MGI"/>
</dbReference>
<dbReference type="GO" id="GO:0005759">
    <property type="term" value="C:mitochondrial matrix"/>
    <property type="evidence" value="ECO:0000266"/>
    <property type="project" value="ComplexPortal"/>
</dbReference>
<dbReference type="GO" id="GO:0042645">
    <property type="term" value="C:mitochondrial nucleoid"/>
    <property type="evidence" value="ECO:0000250"/>
    <property type="project" value="UniProtKB"/>
</dbReference>
<dbReference type="GO" id="GO:0005739">
    <property type="term" value="C:mitochondrion"/>
    <property type="evidence" value="ECO:0007005"/>
    <property type="project" value="MGI"/>
</dbReference>
<dbReference type="GO" id="GO:0032991">
    <property type="term" value="C:protein-containing complex"/>
    <property type="evidence" value="ECO:0000266"/>
    <property type="project" value="MGI"/>
</dbReference>
<dbReference type="GO" id="GO:0051575">
    <property type="term" value="F:5'-deoxyribose-5-phosphate lyase activity"/>
    <property type="evidence" value="ECO:0000250"/>
    <property type="project" value="UniProtKB"/>
</dbReference>
<dbReference type="GO" id="GO:0003682">
    <property type="term" value="F:chromatin binding"/>
    <property type="evidence" value="ECO:0000250"/>
    <property type="project" value="UniProtKB"/>
</dbReference>
<dbReference type="GO" id="GO:0003677">
    <property type="term" value="F:DNA binding"/>
    <property type="evidence" value="ECO:0007669"/>
    <property type="project" value="UniProtKB-KW"/>
</dbReference>
<dbReference type="GO" id="GO:0003887">
    <property type="term" value="F:DNA-directed DNA polymerase activity"/>
    <property type="evidence" value="ECO:0000250"/>
    <property type="project" value="UniProtKB"/>
</dbReference>
<dbReference type="GO" id="GO:0004527">
    <property type="term" value="F:exonuclease activity"/>
    <property type="evidence" value="ECO:0000314"/>
    <property type="project" value="MGI"/>
</dbReference>
<dbReference type="GO" id="GO:0046872">
    <property type="term" value="F:metal ion binding"/>
    <property type="evidence" value="ECO:0007669"/>
    <property type="project" value="UniProtKB-KW"/>
</dbReference>
<dbReference type="GO" id="GO:0008310">
    <property type="term" value="F:single-stranded DNA 3'-5' DNA exonuclease activity"/>
    <property type="evidence" value="ECO:0000250"/>
    <property type="project" value="UniProtKB"/>
</dbReference>
<dbReference type="GO" id="GO:0006284">
    <property type="term" value="P:base-excision repair"/>
    <property type="evidence" value="ECO:0000250"/>
    <property type="project" value="UniProtKB"/>
</dbReference>
<dbReference type="GO" id="GO:0008340">
    <property type="term" value="P:determination of adult lifespan"/>
    <property type="evidence" value="ECO:0000315"/>
    <property type="project" value="MGI"/>
</dbReference>
<dbReference type="GO" id="GO:0045004">
    <property type="term" value="P:DNA replication proofreading"/>
    <property type="evidence" value="ECO:0000250"/>
    <property type="project" value="UniProtKB"/>
</dbReference>
<dbReference type="GO" id="GO:0006264">
    <property type="term" value="P:mitochondrial DNA replication"/>
    <property type="evidence" value="ECO:0000315"/>
    <property type="project" value="UniProtKB"/>
</dbReference>
<dbReference type="CDD" id="cd08641">
    <property type="entry name" value="DNA_pol_gammaA"/>
    <property type="match status" value="1"/>
</dbReference>
<dbReference type="FunFam" id="1.10.150.20:FF:000024">
    <property type="entry name" value="DNA polymerase gamma, catalytic subunit"/>
    <property type="match status" value="1"/>
</dbReference>
<dbReference type="FunFam" id="3.30.420.390:FF:000001">
    <property type="entry name" value="DNA polymerase gamma, catalytic subunit"/>
    <property type="match status" value="1"/>
</dbReference>
<dbReference type="FunFam" id="3.30.420.390:FF:000002">
    <property type="entry name" value="DNA polymerase gamma, catalytic subunit"/>
    <property type="match status" value="1"/>
</dbReference>
<dbReference type="Gene3D" id="1.20.5.3960">
    <property type="match status" value="1"/>
</dbReference>
<dbReference type="Gene3D" id="3.30.420.390">
    <property type="match status" value="1"/>
</dbReference>
<dbReference type="Gene3D" id="3.30.70.370">
    <property type="match status" value="1"/>
</dbReference>
<dbReference type="Gene3D" id="1.10.150.20">
    <property type="entry name" value="5' to 3' exonuclease, C-terminal subdomain"/>
    <property type="match status" value="1"/>
</dbReference>
<dbReference type="InterPro" id="IPR019760">
    <property type="entry name" value="DNA-dir_DNA_pol_A_CS"/>
</dbReference>
<dbReference type="InterPro" id="IPR002297">
    <property type="entry name" value="DNA-dir_DNA_pol_A_mt"/>
</dbReference>
<dbReference type="InterPro" id="IPR001098">
    <property type="entry name" value="DNA-dir_DNA_pol_A_palm_dom"/>
</dbReference>
<dbReference type="InterPro" id="IPR043502">
    <property type="entry name" value="DNA/RNA_pol_sf"/>
</dbReference>
<dbReference type="InterPro" id="IPR041336">
    <property type="entry name" value="DNApol_Exo"/>
</dbReference>
<dbReference type="InterPro" id="IPR047580">
    <property type="entry name" value="POLG_palm_dom"/>
</dbReference>
<dbReference type="InterPro" id="IPR012337">
    <property type="entry name" value="RNaseH-like_sf"/>
</dbReference>
<dbReference type="PANTHER" id="PTHR10267">
    <property type="entry name" value="DNA POLYMERASE SUBUNIT GAMMA-1"/>
    <property type="match status" value="1"/>
</dbReference>
<dbReference type="PANTHER" id="PTHR10267:SF0">
    <property type="entry name" value="DNA POLYMERASE SUBUNIT GAMMA-1"/>
    <property type="match status" value="1"/>
</dbReference>
<dbReference type="Pfam" id="PF18136">
    <property type="entry name" value="DNApol_Exo"/>
    <property type="match status" value="1"/>
</dbReference>
<dbReference type="PIRSF" id="PIRSF000797">
    <property type="entry name" value="DNA_pol_mt"/>
    <property type="match status" value="1"/>
</dbReference>
<dbReference type="PRINTS" id="PR00867">
    <property type="entry name" value="DNAPOLG"/>
</dbReference>
<dbReference type="SMART" id="SM00482">
    <property type="entry name" value="POLAc"/>
    <property type="match status" value="1"/>
</dbReference>
<dbReference type="SUPFAM" id="SSF56672">
    <property type="entry name" value="DNA/RNA polymerases"/>
    <property type="match status" value="1"/>
</dbReference>
<dbReference type="SUPFAM" id="SSF53098">
    <property type="entry name" value="Ribonuclease H-like"/>
    <property type="match status" value="1"/>
</dbReference>
<dbReference type="PROSITE" id="PS00447">
    <property type="entry name" value="DNA_POLYMERASE_A"/>
    <property type="match status" value="1"/>
</dbReference>
<sequence length="1218" mass="136758">MSRLLWKKVAGAKVASGPVPATARWVASSVLDPVPSDGRPPSQMPSSENGQLRLNPLLIQMLSRGLHEQIFGCGGEMPDEAAVQRSVEHLQKHGLWGQPATPLPDVELRLPRLFGGNLDQHFRLLAQKQSLPYLEAAASLLEAQLPPEPKSWAWAEGWTRYGPEGEAEPVAIPEERALVFDVEVCLAEGTCPTLAVAISPSAWYSWCSRRLVEERYSWTSQLSPADLIPLGGSTSASSSTKQDGQEQLVVGHNVSFDRAHIREQYLIQDSRMRFLDTMSMHMAISGLSSFQRSLWMGAKQGKHKNPAAHKARAEVPEESQWSSESSSWDWMDISSANNLADVHNLYVGGPPLEKEPRELFVKGSMRDIRENFQDLMQYCARDVWATFEVFQQQLPLFLERCPHPVTLAGMLEMGVSYLPVNQNWERYLTEAQNTYEELQREMKKSLMDLANDACQLLSGERYKEDPWLWDLEWDLQEFKQKKAKKVKKPASASKLPIEGAGPFGDPMDQEDPGPPSEEEELQRSVTAHNRLQQLRSTTDLLPKRPQHLPGHPGWYRQLCPRLDDPAWAPGPSLLSLQMRVTPKLMALTWDGFPLHYSDSHGWGYLVPGRRDNLTEPPVSPTVESAAVTCPYRAIESLYRKHCLEQGKQQLEPQEVDLAEEFLLTDNSAMWQTVEELGCLDVEAEAKMENSGLSQPLVLPAACAPKSSQPTYHHGNGPYNDVNIPGCWFFKLPHKDGNNYNVGSPFAKDFLPKMEDGTLQAGPGGASGPRALEINKMISFWRNAHKRISSQMVVWLPRSALPRVVTRHPAFDEEGHYGAILPQVVTAGTITRRAVEPTWLTASNARPDRVGSELKAMVQAPPGYVLVGADVDSQELWIAAVLGDAHFAGMHGCTAFGWMTLQGRKSRGTDLHSKTAATVGISREHAKIFNYGRIYGAGQSFAERLLMQFNHRLTRQEAAEKAQQMYAVTKGLRRYRLSADGEWLVKQLNLPVDRTEDGWVSLQDLRMIRREASRKSRWKKWEVAAERAWTGGTESEMFNKLESIAMSDTPRTPVLGCCISRALEPSVVQGEFITSRVNWVVQSSAVDYLHLMLVAMKWLFEEFAIDGRFCISIHDEVRYLVREEDRYRAALALQITNLLTRCMFAYKLGLNDLPQSVAFFSAVDIDQCLRKEVTMDCKTPSNPTGMERRYGIPQGEALDIYQIIELTKGSLEKRSQPGP</sequence>
<proteinExistence type="evidence at protein level"/>
<protein>
    <recommendedName>
        <fullName>DNA polymerase subunit gamma-1</fullName>
        <ecNumber evidence="1 4">2.7.7.7</ecNumber>
    </recommendedName>
    <alternativeName>
        <fullName>3'-5' exodeoxyribonuclease</fullName>
        <ecNumber evidence="1">3.1.11.-</ecNumber>
    </alternativeName>
    <alternativeName>
        <fullName>5'-deoxyribose-phosphate lyase</fullName>
        <ecNumber evidence="1">4.2.99.-</ecNumber>
    </alternativeName>
    <alternativeName>
        <fullName>Mitochondrial DNA polymerase catalytic subunit</fullName>
    </alternativeName>
    <alternativeName>
        <fullName>PolG-alpha</fullName>
        <shortName evidence="5">PolgA</shortName>
    </alternativeName>
</protein>
<reference key="1">
    <citation type="submission" date="1996-05" db="EMBL/GenBank/DDBJ databases">
        <authorList>
            <person name="Chang S.W."/>
            <person name="Colvin S."/>
            <person name="Sarkos P."/>
            <person name="Denniger G."/>
            <person name="Zassenhaus H.P."/>
        </authorList>
    </citation>
    <scope>NUCLEOTIDE SEQUENCE [MRNA]</scope>
    <source>
        <strain>BALB/cJ</strain>
        <tissue>Muscle</tissue>
    </source>
</reference>
<reference key="2">
    <citation type="journal article" date="2000" name="DNA Cell Biol.">
        <title>Genomic structure of murine mitochondrial DNA polymerase-gamma.</title>
        <authorList>
            <person name="Mott J.L."/>
            <person name="Denniger G."/>
            <person name="Zullo S.J."/>
            <person name="Zassenhaus H.P."/>
        </authorList>
    </citation>
    <scope>NUCLEOTIDE SEQUENCE [GENOMIC DNA]</scope>
    <source>
        <strain>129/Sv</strain>
    </source>
</reference>
<reference key="3">
    <citation type="journal article" date="2004" name="Nature">
        <title>Premature ageing in mice expressing defective mitochondrial DNA polymerase.</title>
        <authorList>
            <person name="Trifunovic A."/>
            <person name="Wredenberg A."/>
            <person name="Falkenberg M."/>
            <person name="Spelbrink J.N."/>
            <person name="Rovio A.T."/>
            <person name="Bruder C.E."/>
            <person name="Bohlooly-Y M."/>
            <person name="Gidloef S."/>
            <person name="Oldfors A."/>
            <person name="Wibom R."/>
            <person name="Toernell J."/>
            <person name="Jacobs H.T."/>
            <person name="Larsson N.G."/>
        </authorList>
    </citation>
    <scope>FUNCTION</scope>
    <scope>CATALYTIC ACTIVITY</scope>
    <scope>MUTAGENESIS OF ASP-257</scope>
</reference>
<reference key="4">
    <citation type="journal article" date="2015" name="Nat. Commun.">
        <title>The exonuclease activity of DNA polymerase gamma is required for ligation during mitochondrial DNA replication.</title>
        <authorList>
            <person name="Macao B."/>
            <person name="Uhler J.P."/>
            <person name="Siibak T."/>
            <person name="Zhu X."/>
            <person name="Shi Y."/>
            <person name="Sheng W."/>
            <person name="Olsson M."/>
            <person name="Stewart J.B."/>
            <person name="Gustafsson C.M."/>
            <person name="Falkenberg M."/>
        </authorList>
    </citation>
    <scope>FUNCTION</scope>
    <scope>CATALYTIC ACTIVITY</scope>
    <scope>MUTAGENESIS OF ASP-257</scope>
</reference>
<accession>P54099</accession>
<accession>Q9JI28</accession>
<organism>
    <name type="scientific">Mus musculus</name>
    <name type="common">Mouse</name>
    <dbReference type="NCBI Taxonomy" id="10090"/>
    <lineage>
        <taxon>Eukaryota</taxon>
        <taxon>Metazoa</taxon>
        <taxon>Chordata</taxon>
        <taxon>Craniata</taxon>
        <taxon>Vertebrata</taxon>
        <taxon>Euteleostomi</taxon>
        <taxon>Mammalia</taxon>
        <taxon>Eutheria</taxon>
        <taxon>Euarchontoglires</taxon>
        <taxon>Glires</taxon>
        <taxon>Rodentia</taxon>
        <taxon>Myomorpha</taxon>
        <taxon>Muroidea</taxon>
        <taxon>Muridae</taxon>
        <taxon>Murinae</taxon>
        <taxon>Mus</taxon>
        <taxon>Mus</taxon>
    </lineage>
</organism>
<keyword id="KW-0235">DNA replication</keyword>
<keyword id="KW-0238">DNA-binding</keyword>
<keyword id="KW-0239">DNA-directed DNA polymerase</keyword>
<keyword id="KW-0378">Hydrolase</keyword>
<keyword id="KW-0456">Lyase</keyword>
<keyword id="KW-0460">Magnesium</keyword>
<keyword id="KW-0479">Metal-binding</keyword>
<keyword id="KW-0496">Mitochondrion</keyword>
<keyword id="KW-1135">Mitochondrion nucleoid</keyword>
<keyword id="KW-0548">Nucleotidyltransferase</keyword>
<keyword id="KW-1185">Reference proteome</keyword>
<keyword id="KW-0808">Transferase</keyword>
<comment type="function">
    <text evidence="1 3 4">Catalytic subunit of DNA polymerase gamma solely responsible for replication of mitochondrial DNA (mtDNA). Replicates both heavy and light strands of the circular mtDNA genome using a single-stranded DNA template, RNA primers and the four deoxyribonucleoside triphosphates as substrates (By similarity) (PubMed:26095671). Has 5' -&gt; 3' polymerase activity. Functionally interacts with TWNK and SSBP1 at the replication fork to form a highly processive replisome, where TWNK unwinds the double-stranded DNA template prior to replication and SSBP1 covers the parental heavy strand to enable continuous replication of the entire mitochondrial genome. A single nucleotide incorporation cycle includes binding of the incoming nucleotide at the insertion site, a phosphodiester bond formation reaction that extends the 3'-end of the primer DNA, and translocation of the primer terminus to the post-insertion site. After completing replication of a mtDNA strand, mediates 3' -&gt; 5' exonucleolytic degradation at the nick to enable proper ligation (By similarity) (PubMed:26095671). Highly accurate due to high nucleotide selectivity and 3' -&gt; 5' exonucleolytic proofreading. Proficiently corrects base substitutions, single-base additions and deletions in non-repetitive sequences and short repeats, but displays lower proofreading activity when replicating longer homopolymeric stretches. Exerts exonuclease activity toward single-stranded DNA and double-stranded DNA containing 3'-terminal mispairs. When a misincorporation occurs, transitions from replication to a pro-nucleolytic editing mode and removes the missincorporated nucleoside in the exonuclease active site. Proceeds via an SN2 nucleolytic mechanism in which Asp-198 catalyzes phosphodiester bond hydrolysis and Glu-200 stabilizes the leaving group. As a result the primer strand becomes one nucleotide shorter and is positioned in the post-insertion site, ready to resume DNA synthesis (By similarity) (PubMed:15164064, PubMed:26095671). Exerts 5'-deoxyribose phosphate (dRP) lyase activity and mediates repair-associated mtDNA synthesis (gap filling) in base-excision repair pathway. Catalyzes the release of the 5'-terminal 2-deoxyribose-5-phosphate sugar moiety from incised apurinic/apyrimidinic (AP) sites to produce a substrate for DNA ligase. The dRP lyase reaction does not require divalent metal ions and likely proceeds via a Schiff base intermediate in a beta-elimination reaction mechanism (By similarity).</text>
</comment>
<comment type="catalytic activity">
    <reaction evidence="1 4">
        <text>DNA(n) + a 2'-deoxyribonucleoside 5'-triphosphate = DNA(n+1) + diphosphate</text>
        <dbReference type="Rhea" id="RHEA:22508"/>
        <dbReference type="Rhea" id="RHEA-COMP:17339"/>
        <dbReference type="Rhea" id="RHEA-COMP:17340"/>
        <dbReference type="ChEBI" id="CHEBI:33019"/>
        <dbReference type="ChEBI" id="CHEBI:61560"/>
        <dbReference type="ChEBI" id="CHEBI:173112"/>
        <dbReference type="EC" id="2.7.7.7"/>
    </reaction>
    <physiologicalReaction direction="left-to-right" evidence="1 4">
        <dbReference type="Rhea" id="RHEA:22509"/>
    </physiologicalReaction>
</comment>
<comment type="catalytic activity">
    <reaction evidence="1 3 4">
        <text>a 3'-end 2'-deoxyribonucleotidyl-deoxyribonucleotide-DNA + H2O = a 3'-end 2'-deoxyribonucleotide-DNA + a 2'-deoxyribonucleoside 5'-phosphate + H(+)</text>
        <dbReference type="Rhea" id="RHEA:77911"/>
        <dbReference type="Rhea" id="RHEA-COMP:13863"/>
        <dbReference type="Rhea" id="RHEA-COMP:19009"/>
        <dbReference type="ChEBI" id="CHEBI:15377"/>
        <dbReference type="ChEBI" id="CHEBI:15378"/>
        <dbReference type="ChEBI" id="CHEBI:65317"/>
        <dbReference type="ChEBI" id="CHEBI:138148"/>
        <dbReference type="ChEBI" id="CHEBI:228185"/>
    </reaction>
    <physiologicalReaction direction="left-to-right" evidence="1 3 4">
        <dbReference type="Rhea" id="RHEA:77912"/>
    </physiologicalReaction>
</comment>
<comment type="catalytic activity">
    <reaction evidence="1">
        <text>a 5'-end 2'-deoxyribose-2'-deoxyribonucleotide-DNA = (2E,4S)-4-hydroxypenten-2-al-5-phosphate + a 5'-end 5'-phospho-2'-deoxyribonucleoside-DNA + H(+)</text>
        <dbReference type="Rhea" id="RHEA:76255"/>
        <dbReference type="Rhea" id="RHEA-COMP:13180"/>
        <dbReference type="Rhea" id="RHEA-COMP:18657"/>
        <dbReference type="ChEBI" id="CHEBI:15378"/>
        <dbReference type="ChEBI" id="CHEBI:136412"/>
        <dbReference type="ChEBI" id="CHEBI:195194"/>
        <dbReference type="ChEBI" id="CHEBI:195195"/>
    </reaction>
    <physiologicalReaction direction="left-to-right" evidence="1">
        <dbReference type="Rhea" id="RHEA:76256"/>
    </physiologicalReaction>
</comment>
<comment type="cofactor">
    <cofactor evidence="1">
        <name>Mg(2+)</name>
        <dbReference type="ChEBI" id="CHEBI:18420"/>
    </cofactor>
</comment>
<comment type="activity regulation">
    <text evidence="1">Inhibited by dideoxynucleotides such as antiviral agent zalcitabine.</text>
</comment>
<comment type="subunit">
    <text evidence="1">Heterotrimer composed of a catalytic subunit and a homodimer of accessory subunits (POLG:POLG2). Interacts with TTC3. Interacts with LIG3.</text>
</comment>
<comment type="interaction">
    <interactant intactId="EBI-863636">
        <id>P54099</id>
    </interactant>
    <interactant intactId="EBI-1635071">
        <id>P09671</id>
        <label>Sod2</label>
    </interactant>
    <organismsDiffer>false</organismsDiffer>
    <experiments>2</experiments>
</comment>
<comment type="interaction">
    <interactant intactId="EBI-863636">
        <id>P54099</id>
    </interactant>
    <interactant intactId="EBI-474016">
        <id>P02340</id>
        <label>Tp53</label>
    </interactant>
    <organismsDiffer>false</organismsDiffer>
    <experiments>2</experiments>
</comment>
<comment type="subcellular location">
    <subcellularLocation>
        <location evidence="1">Mitochondrion</location>
    </subcellularLocation>
    <subcellularLocation>
        <location evidence="1">Mitochondrion matrix</location>
        <location evidence="1">Mitochondrion nucleoid</location>
    </subcellularLocation>
</comment>
<comment type="domain">
    <text evidence="1">The polymerase domain encompasses three conserved active site motifs: Pol A (residues 866-875), Pol B (residues 922-937) and Pol C (residues 1113-1120). Binds the incoming dNTPs and undergoes an open to close coformation change to catalyze the formation of phosphodiester bond.</text>
</comment>
<comment type="domain">
    <text evidence="1">The 3' -&gt; 5' exonuclease domain comprises three conserved active site motifs: Exo I (residues 179-183), Exo II (residues 250-258) and Exo III (residues 378-386). Proofreads the newly synthesized DNA strand.</text>
</comment>
<comment type="domain">
    <text evidence="1">The trigger loop contracts to enable correctly matched primer-template pair entry into the polymerase domain and extends to preclude the mismatched one.</text>
</comment>
<comment type="domain">
    <text evidence="1">The accessory determinant domain (AID) interacts with POLG2 proximal monomer.</text>
</comment>
<comment type="similarity">
    <text evidence="6">Belongs to the DNA polymerase type-A family.</text>
</comment>
<comment type="sequence caution" evidence="6">
    <conflict type="frameshift">
        <sequence resource="EMBL-CDS" id="AAA98977"/>
    </conflict>
</comment>
<comment type="sequence caution" evidence="6">
    <conflict type="erroneous gene model prediction">
        <sequence resource="EMBL-CDS" id="AAF82772"/>
    </conflict>
</comment>
<gene>
    <name evidence="7" type="primary">Polg</name>
    <name type="synonym">Polg1</name>
</gene>
<evidence type="ECO:0000250" key="1">
    <source>
        <dbReference type="UniProtKB" id="P54098"/>
    </source>
</evidence>
<evidence type="ECO:0000256" key="2">
    <source>
        <dbReference type="SAM" id="MobiDB-lite"/>
    </source>
</evidence>
<evidence type="ECO:0000269" key="3">
    <source>
    </source>
</evidence>
<evidence type="ECO:0000269" key="4">
    <source>
    </source>
</evidence>
<evidence type="ECO:0000303" key="5">
    <source>
    </source>
</evidence>
<evidence type="ECO:0000305" key="6"/>
<evidence type="ECO:0000312" key="7">
    <source>
        <dbReference type="MGI" id="MGI:1196389"/>
    </source>
</evidence>
<name>DPOG1_MOUSE</name>